<proteinExistence type="inferred from homology"/>
<keyword id="KW-1185">Reference proteome</keyword>
<keyword id="KW-0687">Ribonucleoprotein</keyword>
<keyword id="KW-0689">Ribosomal protein</keyword>
<keyword id="KW-0694">RNA-binding</keyword>
<keyword id="KW-0699">rRNA-binding</keyword>
<accession>A0LRN0</accession>
<name>RL14_ACIC1</name>
<organism>
    <name type="scientific">Acidothermus cellulolyticus (strain ATCC 43068 / DSM 8971 / 11B)</name>
    <dbReference type="NCBI Taxonomy" id="351607"/>
    <lineage>
        <taxon>Bacteria</taxon>
        <taxon>Bacillati</taxon>
        <taxon>Actinomycetota</taxon>
        <taxon>Actinomycetes</taxon>
        <taxon>Acidothermales</taxon>
        <taxon>Acidothermaceae</taxon>
        <taxon>Acidothermus</taxon>
    </lineage>
</organism>
<feature type="chain" id="PRO_1000055497" description="Large ribosomal subunit protein uL14">
    <location>
        <begin position="1"/>
        <end position="122"/>
    </location>
</feature>
<dbReference type="EMBL" id="CP000481">
    <property type="protein sequence ID" value="ABK52090.1"/>
    <property type="molecule type" value="Genomic_DNA"/>
</dbReference>
<dbReference type="RefSeq" id="WP_011719153.1">
    <property type="nucleotide sequence ID" value="NC_008578.1"/>
</dbReference>
<dbReference type="SMR" id="A0LRN0"/>
<dbReference type="FunCoup" id="A0LRN0">
    <property type="interactions" value="304"/>
</dbReference>
<dbReference type="STRING" id="351607.Acel_0316"/>
<dbReference type="KEGG" id="ace:Acel_0316"/>
<dbReference type="eggNOG" id="COG0093">
    <property type="taxonomic scope" value="Bacteria"/>
</dbReference>
<dbReference type="HOGENOM" id="CLU_095071_2_1_11"/>
<dbReference type="InParanoid" id="A0LRN0"/>
<dbReference type="OrthoDB" id="9806379at2"/>
<dbReference type="Proteomes" id="UP000008221">
    <property type="component" value="Chromosome"/>
</dbReference>
<dbReference type="GO" id="GO:0022625">
    <property type="term" value="C:cytosolic large ribosomal subunit"/>
    <property type="evidence" value="ECO:0007669"/>
    <property type="project" value="TreeGrafter"/>
</dbReference>
<dbReference type="GO" id="GO:0070180">
    <property type="term" value="F:large ribosomal subunit rRNA binding"/>
    <property type="evidence" value="ECO:0007669"/>
    <property type="project" value="TreeGrafter"/>
</dbReference>
<dbReference type="GO" id="GO:0003735">
    <property type="term" value="F:structural constituent of ribosome"/>
    <property type="evidence" value="ECO:0007669"/>
    <property type="project" value="InterPro"/>
</dbReference>
<dbReference type="GO" id="GO:0006412">
    <property type="term" value="P:translation"/>
    <property type="evidence" value="ECO:0007669"/>
    <property type="project" value="UniProtKB-UniRule"/>
</dbReference>
<dbReference type="CDD" id="cd00337">
    <property type="entry name" value="Ribosomal_uL14"/>
    <property type="match status" value="1"/>
</dbReference>
<dbReference type="FunFam" id="2.40.150.20:FF:000001">
    <property type="entry name" value="50S ribosomal protein L14"/>
    <property type="match status" value="1"/>
</dbReference>
<dbReference type="Gene3D" id="2.40.150.20">
    <property type="entry name" value="Ribosomal protein L14"/>
    <property type="match status" value="1"/>
</dbReference>
<dbReference type="HAMAP" id="MF_01367">
    <property type="entry name" value="Ribosomal_uL14"/>
    <property type="match status" value="1"/>
</dbReference>
<dbReference type="InterPro" id="IPR000218">
    <property type="entry name" value="Ribosomal_uL14"/>
</dbReference>
<dbReference type="InterPro" id="IPR005745">
    <property type="entry name" value="Ribosomal_uL14_bac-type"/>
</dbReference>
<dbReference type="InterPro" id="IPR019972">
    <property type="entry name" value="Ribosomal_uL14_CS"/>
</dbReference>
<dbReference type="InterPro" id="IPR036853">
    <property type="entry name" value="Ribosomal_uL14_sf"/>
</dbReference>
<dbReference type="NCBIfam" id="TIGR01067">
    <property type="entry name" value="rplN_bact"/>
    <property type="match status" value="1"/>
</dbReference>
<dbReference type="PANTHER" id="PTHR11761">
    <property type="entry name" value="50S/60S RIBOSOMAL PROTEIN L14/L23"/>
    <property type="match status" value="1"/>
</dbReference>
<dbReference type="PANTHER" id="PTHR11761:SF3">
    <property type="entry name" value="LARGE RIBOSOMAL SUBUNIT PROTEIN UL14M"/>
    <property type="match status" value="1"/>
</dbReference>
<dbReference type="Pfam" id="PF00238">
    <property type="entry name" value="Ribosomal_L14"/>
    <property type="match status" value="1"/>
</dbReference>
<dbReference type="SMART" id="SM01374">
    <property type="entry name" value="Ribosomal_L14"/>
    <property type="match status" value="1"/>
</dbReference>
<dbReference type="SUPFAM" id="SSF50193">
    <property type="entry name" value="Ribosomal protein L14"/>
    <property type="match status" value="1"/>
</dbReference>
<dbReference type="PROSITE" id="PS00049">
    <property type="entry name" value="RIBOSOMAL_L14"/>
    <property type="match status" value="1"/>
</dbReference>
<reference key="1">
    <citation type="journal article" date="2009" name="Genome Res.">
        <title>Complete genome of the cellulolytic thermophile Acidothermus cellulolyticus 11B provides insights into its ecophysiological and evolutionary adaptations.</title>
        <authorList>
            <person name="Barabote R.D."/>
            <person name="Xie G."/>
            <person name="Leu D.H."/>
            <person name="Normand P."/>
            <person name="Necsulea A."/>
            <person name="Daubin V."/>
            <person name="Medigue C."/>
            <person name="Adney W.S."/>
            <person name="Xu X.C."/>
            <person name="Lapidus A."/>
            <person name="Parales R.E."/>
            <person name="Detter C."/>
            <person name="Pujic P."/>
            <person name="Bruce D."/>
            <person name="Lavire C."/>
            <person name="Challacombe J.F."/>
            <person name="Brettin T.S."/>
            <person name="Berry A.M."/>
        </authorList>
    </citation>
    <scope>NUCLEOTIDE SEQUENCE [LARGE SCALE GENOMIC DNA]</scope>
    <source>
        <strain>ATCC 43068 / DSM 8971 / 11B</strain>
    </source>
</reference>
<comment type="function">
    <text evidence="1">Binds to 23S rRNA. Forms part of two intersubunit bridges in the 70S ribosome.</text>
</comment>
<comment type="subunit">
    <text evidence="1">Part of the 50S ribosomal subunit. Forms a cluster with proteins L3 and L19. In the 70S ribosome, L14 and L19 interact and together make contacts with the 16S rRNA in bridges B5 and B8.</text>
</comment>
<comment type="similarity">
    <text evidence="1">Belongs to the universal ribosomal protein uL14 family.</text>
</comment>
<gene>
    <name evidence="1" type="primary">rplN</name>
    <name type="ordered locus">Acel_0316</name>
</gene>
<sequence length="122" mass="13243">MIQQESRLKVADNTGAREILCIRVLGGSGRRYAGIGDVIIATVKDALPGAGVKKGDVVKAVVVRTAKERRRPDGSYIKFDENAAVLIKDGGDPRGTRIFGPVGRELREKKFMRIISLAPEVL</sequence>
<protein>
    <recommendedName>
        <fullName evidence="1">Large ribosomal subunit protein uL14</fullName>
    </recommendedName>
    <alternativeName>
        <fullName evidence="2">50S ribosomal protein L14</fullName>
    </alternativeName>
</protein>
<evidence type="ECO:0000255" key="1">
    <source>
        <dbReference type="HAMAP-Rule" id="MF_01367"/>
    </source>
</evidence>
<evidence type="ECO:0000305" key="2"/>